<comment type="function">
    <text evidence="1">Required for the assembly and stability of the mitochondrial ribosome (By similarity). Is a positive regulator of mitochondrial protein synthesis (By similarity).</text>
</comment>
<comment type="subunit">
    <text evidence="1">Interacts with the large mitochondrial ribosomal subunit.</text>
</comment>
<comment type="subcellular location">
    <subcellularLocation>
        <location evidence="3">Membrane</location>
        <topology evidence="3">Multi-pass membrane protein</topology>
    </subcellularLocation>
    <subcellularLocation>
        <location evidence="1">Mitochondrion inner membrane</location>
    </subcellularLocation>
</comment>
<comment type="similarity">
    <text evidence="3">Belongs to the peroxisomal membrane protein PXMP2/4 family.</text>
</comment>
<protein>
    <recommendedName>
        <fullName>Mpv17-like protein 2</fullName>
    </recommendedName>
</protein>
<name>M17L2_DANRE</name>
<proteinExistence type="evidence at transcript level"/>
<sequence>MISRQGKEFLVRIAGYWKPLFRGRFLIVTNTVSCGGMLAAGDLIQQTREIRRTPGRTRDWSRTGCMFAVGCSMGPFMHYWYQWLDKYFIGNGINNVCKKVLVDQLVASPTLGAWYFLGMGMMEGHTFIEAQQEFRDKFWEFYKADWCVWPAAQMINFYFLPPKFRVLYVNIVTLGWDTYLSYLKHRDTVEVTKEADGTA</sequence>
<feature type="chain" id="PRO_0000317623" description="Mpv17-like protein 2">
    <location>
        <begin position="1"/>
        <end position="199"/>
    </location>
</feature>
<feature type="transmembrane region" description="Helical" evidence="2">
    <location>
        <begin position="25"/>
        <end position="45"/>
    </location>
</feature>
<feature type="transmembrane region" description="Helical" evidence="2">
    <location>
        <begin position="64"/>
        <end position="84"/>
    </location>
</feature>
<feature type="transmembrane region" description="Helical" evidence="2">
    <location>
        <begin position="105"/>
        <end position="122"/>
    </location>
</feature>
<feature type="sequence conflict" description="In Ref. 1; AAH86824." evidence="3" ref="1">
    <original>T</original>
    <variation>A</variation>
    <location>
        <position position="110"/>
    </location>
</feature>
<reference key="1">
    <citation type="submission" date="2004-07" db="EMBL/GenBank/DDBJ databases">
        <authorList>
            <consortium name="NIH - Zebrafish Gene Collection (ZGC) project"/>
        </authorList>
    </citation>
    <scope>NUCLEOTIDE SEQUENCE [LARGE SCALE MRNA]</scope>
    <source>
        <strain>AB</strain>
        <tissue>Liver</tissue>
        <tissue>Ovary</tissue>
    </source>
</reference>
<evidence type="ECO:0000250" key="1">
    <source>
        <dbReference type="UniProtKB" id="Q567V2"/>
    </source>
</evidence>
<evidence type="ECO:0000255" key="2"/>
<evidence type="ECO:0000305" key="3"/>
<dbReference type="EMBL" id="BC076231">
    <property type="protein sequence ID" value="AAH76231.1"/>
    <property type="molecule type" value="mRNA"/>
</dbReference>
<dbReference type="EMBL" id="BC086824">
    <property type="protein sequence ID" value="AAH86824.1"/>
    <property type="molecule type" value="mRNA"/>
</dbReference>
<dbReference type="RefSeq" id="NP_001002567.1">
    <property type="nucleotide sequence ID" value="NM_001002567.1"/>
</dbReference>
<dbReference type="FunCoup" id="Q6DGV7">
    <property type="interactions" value="493"/>
</dbReference>
<dbReference type="STRING" id="7955.ENSDARP00000073314"/>
<dbReference type="PaxDb" id="7955-ENSDARP00000073314"/>
<dbReference type="Ensembl" id="ENSDART00000078854">
    <property type="protein sequence ID" value="ENSDARP00000073314"/>
    <property type="gene ID" value="ENSDARG00000056367"/>
</dbReference>
<dbReference type="Ensembl" id="ENSDART00000189577">
    <property type="protein sequence ID" value="ENSDARP00000150168"/>
    <property type="gene ID" value="ENSDARG00000112107"/>
</dbReference>
<dbReference type="GeneID" id="436840"/>
<dbReference type="KEGG" id="dre:436840"/>
<dbReference type="AGR" id="ZFIN:ZDB-GENE-040718-306"/>
<dbReference type="CTD" id="84769"/>
<dbReference type="ZFIN" id="ZDB-GENE-040718-306">
    <property type="gene designation" value="mpv17l2"/>
</dbReference>
<dbReference type="eggNOG" id="KOG1944">
    <property type="taxonomic scope" value="Eukaryota"/>
</dbReference>
<dbReference type="HOGENOM" id="CLU_049109_4_1_1"/>
<dbReference type="InParanoid" id="Q6DGV7"/>
<dbReference type="OMA" id="CAPTMIG"/>
<dbReference type="OrthoDB" id="10267969at2759"/>
<dbReference type="PhylomeDB" id="Q6DGV7"/>
<dbReference type="TreeFam" id="TF324392"/>
<dbReference type="PRO" id="PR:Q6DGV7"/>
<dbReference type="Proteomes" id="UP000000437">
    <property type="component" value="Alternate scaffold 2"/>
</dbReference>
<dbReference type="Proteomes" id="UP000000437">
    <property type="component" value="Chromosome 2"/>
</dbReference>
<dbReference type="Bgee" id="ENSDARG00000056367">
    <property type="expression patterns" value="Expressed in early embryo and 20 other cell types or tissues"/>
</dbReference>
<dbReference type="GO" id="GO:0005737">
    <property type="term" value="C:cytoplasm"/>
    <property type="evidence" value="ECO:0000318"/>
    <property type="project" value="GO_Central"/>
</dbReference>
<dbReference type="GO" id="GO:0005743">
    <property type="term" value="C:mitochondrial inner membrane"/>
    <property type="evidence" value="ECO:0007669"/>
    <property type="project" value="UniProtKB-SubCell"/>
</dbReference>
<dbReference type="GO" id="GO:0005739">
    <property type="term" value="C:mitochondrion"/>
    <property type="evidence" value="ECO:0000318"/>
    <property type="project" value="GO_Central"/>
</dbReference>
<dbReference type="GO" id="GO:0061668">
    <property type="term" value="P:mitochondrial ribosome assembly"/>
    <property type="evidence" value="ECO:0000318"/>
    <property type="project" value="GO_Central"/>
</dbReference>
<dbReference type="InterPro" id="IPR007248">
    <property type="entry name" value="Mpv17_PMP22"/>
</dbReference>
<dbReference type="PANTHER" id="PTHR11266:SF8">
    <property type="entry name" value="MPV17-LIKE PROTEIN 2"/>
    <property type="match status" value="1"/>
</dbReference>
<dbReference type="PANTHER" id="PTHR11266">
    <property type="entry name" value="PEROXISOMAL MEMBRANE PROTEIN 2, PXMP2 MPV17"/>
    <property type="match status" value="1"/>
</dbReference>
<dbReference type="Pfam" id="PF04117">
    <property type="entry name" value="Mpv17_PMP22"/>
    <property type="match status" value="1"/>
</dbReference>
<accession>Q6DGV7</accession>
<accession>Q5PR53</accession>
<gene>
    <name type="primary">mpv17l2</name>
    <name type="ORF">zgc:92754</name>
</gene>
<keyword id="KW-0472">Membrane</keyword>
<keyword id="KW-0496">Mitochondrion</keyword>
<keyword id="KW-0999">Mitochondrion inner membrane</keyword>
<keyword id="KW-1185">Reference proteome</keyword>
<keyword id="KW-0812">Transmembrane</keyword>
<keyword id="KW-1133">Transmembrane helix</keyword>
<organism>
    <name type="scientific">Danio rerio</name>
    <name type="common">Zebrafish</name>
    <name type="synonym">Brachydanio rerio</name>
    <dbReference type="NCBI Taxonomy" id="7955"/>
    <lineage>
        <taxon>Eukaryota</taxon>
        <taxon>Metazoa</taxon>
        <taxon>Chordata</taxon>
        <taxon>Craniata</taxon>
        <taxon>Vertebrata</taxon>
        <taxon>Euteleostomi</taxon>
        <taxon>Actinopterygii</taxon>
        <taxon>Neopterygii</taxon>
        <taxon>Teleostei</taxon>
        <taxon>Ostariophysi</taxon>
        <taxon>Cypriniformes</taxon>
        <taxon>Danionidae</taxon>
        <taxon>Danioninae</taxon>
        <taxon>Danio</taxon>
    </lineage>
</organism>